<organism>
    <name type="scientific">Takifugu rubripes</name>
    <name type="common">Japanese pufferfish</name>
    <name type="synonym">Fugu rubripes</name>
    <dbReference type="NCBI Taxonomy" id="31033"/>
    <lineage>
        <taxon>Eukaryota</taxon>
        <taxon>Metazoa</taxon>
        <taxon>Chordata</taxon>
        <taxon>Craniata</taxon>
        <taxon>Vertebrata</taxon>
        <taxon>Euteleostomi</taxon>
        <taxon>Actinopterygii</taxon>
        <taxon>Neopterygii</taxon>
        <taxon>Teleostei</taxon>
        <taxon>Neoteleostei</taxon>
        <taxon>Acanthomorphata</taxon>
        <taxon>Eupercaria</taxon>
        <taxon>Tetraodontiformes</taxon>
        <taxon>Tetradontoidea</taxon>
        <taxon>Tetraodontidae</taxon>
        <taxon>Takifugu</taxon>
    </lineage>
</organism>
<gene>
    <name evidence="1" type="primary">pcnx1</name>
    <name type="synonym">pcnx</name>
    <name type="synonym">pcnxl1</name>
</gene>
<reference key="1">
    <citation type="submission" date="1999-05" db="EMBL/GenBank/DDBJ databases">
        <title>Cloning, mapping and expression of the neurogenic pecanex genes in vertebrates: evidence of a new evolutionarily conserved gene family.</title>
        <authorList>
            <person name="Roux A.-F."/>
            <person name="Gasca S."/>
            <person name="Sanoudou D."/>
            <person name="Saridaki A."/>
            <person name="Ferraz C."/>
            <person name="Demaille J."/>
            <person name="Bagheri-Fam S."/>
            <person name="Ferguson-Smith M."/>
            <person name="Scherer G."/>
        </authorList>
    </citation>
    <scope>NUCLEOTIDE SEQUENCE [GENOMIC DNA]</scope>
</reference>
<evidence type="ECO:0000250" key="1">
    <source>
        <dbReference type="UniProtKB" id="Q96RV3"/>
    </source>
</evidence>
<evidence type="ECO:0000255" key="2"/>
<evidence type="ECO:0000256" key="3">
    <source>
        <dbReference type="SAM" id="MobiDB-lite"/>
    </source>
</evidence>
<evidence type="ECO:0000305" key="4"/>
<comment type="subcellular location">
    <subcellularLocation>
        <location evidence="4">Membrane</location>
        <topology evidence="4">Multi-pass membrane protein</topology>
    </subcellularLocation>
</comment>
<comment type="similarity">
    <text evidence="4">Belongs to the pecanex family.</text>
</comment>
<keyword id="KW-0325">Glycoprotein</keyword>
<keyword id="KW-0472">Membrane</keyword>
<keyword id="KW-1185">Reference proteome</keyword>
<keyword id="KW-0812">Transmembrane</keyword>
<keyword id="KW-1133">Transmembrane helix</keyword>
<feature type="chain" id="PRO_0000215795" description="Pecanex-like protein 1">
    <location>
        <begin position="1"/>
        <end position="1703"/>
    </location>
</feature>
<feature type="transmembrane region" description="Helical" evidence="2">
    <location>
        <begin position="31"/>
        <end position="53"/>
    </location>
</feature>
<feature type="transmembrane region" description="Helical" evidence="2">
    <location>
        <begin position="57"/>
        <end position="74"/>
    </location>
</feature>
<feature type="transmembrane region" description="Helical" evidence="2">
    <location>
        <begin position="416"/>
        <end position="438"/>
    </location>
</feature>
<feature type="transmembrane region" description="Helical" evidence="2">
    <location>
        <begin position="477"/>
        <end position="499"/>
    </location>
</feature>
<feature type="transmembrane region" description="Helical" evidence="2">
    <location>
        <begin position="525"/>
        <end position="547"/>
    </location>
</feature>
<feature type="transmembrane region" description="Helical" evidence="2">
    <location>
        <begin position="569"/>
        <end position="591"/>
    </location>
</feature>
<feature type="transmembrane region" description="Helical" evidence="2">
    <location>
        <begin position="603"/>
        <end position="622"/>
    </location>
</feature>
<feature type="transmembrane region" description="Helical" evidence="2">
    <location>
        <begin position="675"/>
        <end position="697"/>
    </location>
</feature>
<feature type="transmembrane region" description="Helical" evidence="2">
    <location>
        <begin position="704"/>
        <end position="721"/>
    </location>
</feature>
<feature type="region of interest" description="Disordered" evidence="3">
    <location>
        <begin position="91"/>
        <end position="126"/>
    </location>
</feature>
<feature type="region of interest" description="Disordered" evidence="3">
    <location>
        <begin position="1475"/>
        <end position="1556"/>
    </location>
</feature>
<feature type="region of interest" description="Disordered" evidence="3">
    <location>
        <begin position="1577"/>
        <end position="1598"/>
    </location>
</feature>
<feature type="compositionally biased region" description="Basic and acidic residues" evidence="3">
    <location>
        <begin position="91"/>
        <end position="100"/>
    </location>
</feature>
<feature type="compositionally biased region" description="Low complexity" evidence="3">
    <location>
        <begin position="1485"/>
        <end position="1510"/>
    </location>
</feature>
<feature type="compositionally biased region" description="Low complexity" evidence="3">
    <location>
        <begin position="1518"/>
        <end position="1556"/>
    </location>
</feature>
<feature type="compositionally biased region" description="Basic residues" evidence="3">
    <location>
        <begin position="1582"/>
        <end position="1591"/>
    </location>
</feature>
<feature type="glycosylation site" description="N-linked (GlcNAc...) asparagine" evidence="2">
    <location>
        <position position="256"/>
    </location>
</feature>
<feature type="glycosylation site" description="N-linked (GlcNAc...) asparagine" evidence="2">
    <location>
        <position position="564"/>
    </location>
</feature>
<feature type="glycosylation site" description="N-linked (GlcNAc...) asparagine" evidence="2">
    <location>
        <position position="988"/>
    </location>
</feature>
<feature type="glycosylation site" description="N-linked (GlcNAc...) asparagine" evidence="2">
    <location>
        <position position="1129"/>
    </location>
</feature>
<feature type="glycosylation site" description="N-linked (GlcNAc...) asparagine" evidence="2">
    <location>
        <position position="1391"/>
    </location>
</feature>
<feature type="glycosylation site" description="N-linked (GlcNAc...) asparagine" evidence="2">
    <location>
        <position position="1622"/>
    </location>
</feature>
<name>PCX1_TAKRU</name>
<proteinExistence type="inferred from homology"/>
<sequence length="1703" mass="191348">MGSQTLQILRQGVWASVTGGWYYDPDQNTFVNALHLYIWLFLLCFPFTLYMALQPSMVIVGIYCGVIAAMFLLLKTVNYRLHHALDEGEVVEHQTRESKGSRGGTGGANDPVTRREDSNGLGDPGGGIEMADFIRQETPPVDCSSRNSYVGMDLNQRMSSTHGRTTVAKAPGSEETVIFRRERSTFRRQAVRRRHNAGSNPTPPTSLIGSPLRYALHEADRPSGVRSWYRTVKSQPSRTPSQVTVLSTSASLLARNGSTHLEGSQDKASTVGTTSLQDEFGTLTPSLYEIRGCHIGLGNFESATRRASNNIWDTDSHLSSSTSVRFYPHDLISLHHIRANRLLTMDPELLEQQDDLSPDLQDAPLGQDNPSAASAAGKTRQYYRLWLLPFLWVGLHFDRLTLLALFDRNREVLENVLAVVLAVLVAFLGSVLLIHGFFADIWVFQFCLVIASCQYSLLKSVQPDSSSPRHGHNRIIAYSRPVYFCLCCGLIWLLHYGSLRTTSSRFTLYGVALTSSLVLASARDLVIVFTLCFPIIFFVGLLPQVNTFVMYLFEQLDIHVFGGNASTSLLSALYSILRSIVTVALLYCFCYGALKENWEPHHIPVLFSVFCGLLVAVSYHLSRQSSDPSVLMYVPLSKVFPQLRSKNPEDPLSEVQDPLPEKLRASVNERLQSDLIVCVVIAVLYFAIHVSTVFIALQPYLSYVLYGLLGAVGLLTHYLLPQLRKQLPWYCFSHPLLKTKEYYQFEVRDAAHVMWFEKFHVWLLFVEKNVLYPLVILNELSGSARELASPKRLDTEVGALMITVAGLKLLRSSYSSPTYQYITILFTVLFFTLDHRHLSETLLLDLFLMSIIFSKMWELFYKLHFVYTYIAPWQITWGSAFHAFAQPFAVPHSAMLFVQAVVSSIFSTPLNPFLGSAIFITSYVRPVKFWERDYNTKRVDHSNTRLASQLDRNPGSDDNNLNSIFYEHLTRSLQHSLCGDLLLGRWGNFSTGDCFILASDYLNALVHLIEIGNGLVTFQLRGLEFRGTYCQQREVEAITEGVEEDEGCCCCEPGHLPHILSFNAAFGQRWLAWEVVVTKYVLEGYSITDNSAASMLQVFELRRILTTYYVKGIIYYVIASPKLEEWLANDTMKEGLRGCSERNYVDLDATFNPNIDEDYDHRLSGISRDSFCGVYLGWIQYCNSRRTKPLDSEKDSALVLLCFGLCVLGRRALGTAAHQMSSNLESFLYGLHALFKGDFRISSVRDEWIFADMELLRKVVVPGIRMSLKLHQDHFTSPDEYDEPAVLFEAISTHQQNLVIAHEGDPAWRSAVLSNAPSLLALRHVLDEGTNEYKIIMLNRRYLSFRVIKVNKECVRGLWAGQQQELVFLRNRNPERGSIQNAKQALRNMINSSCDQPIGYPIYVSPLTTSYCNSHPQLRHILGGPISFGNIRNFVVSTWHRLRKGCGAGCNSGGNIEDSDAGGLSCGTSQSSQSVQSGLVRHSPARASVVSQSSSYRYSSSRHSSLRTSTTGLEPCRRSSTSQLSLRTLPTSLQLRLGSTSDPAGPSSSLSSHSIPPCKRHTLVGLLGNDGLCSTVTDPLSQHHHPHHHPQQHNPTHATVRRDDISYRVQIVDVGQVLENINLSKRKELQWPDDAMRHKAGRTCWRDWSPLEGMEGHVIHRWVPCSRDPGSRSHIDKTILLVQVEDKIVPIIETGVIELGAEV</sequence>
<accession>Q98UF7</accession>
<protein>
    <recommendedName>
        <fullName>Pecanex-like protein 1</fullName>
    </recommendedName>
    <alternativeName>
        <fullName evidence="1">Pecanex homolog protein 1</fullName>
    </alternativeName>
</protein>
<dbReference type="EMBL" id="AF154413">
    <property type="protein sequence ID" value="AAK13590.1"/>
    <property type="molecule type" value="Genomic_DNA"/>
</dbReference>
<dbReference type="GlyCosmos" id="Q98UF7">
    <property type="glycosylation" value="6 sites, No reported glycans"/>
</dbReference>
<dbReference type="eggNOG" id="KOG3604">
    <property type="taxonomic scope" value="Eukaryota"/>
</dbReference>
<dbReference type="InParanoid" id="Q98UF7"/>
<dbReference type="Proteomes" id="UP000005226">
    <property type="component" value="Unplaced"/>
</dbReference>
<dbReference type="GO" id="GO:0016020">
    <property type="term" value="C:membrane"/>
    <property type="evidence" value="ECO:0007669"/>
    <property type="project" value="UniProtKB-SubCell"/>
</dbReference>
<dbReference type="InterPro" id="IPR039797">
    <property type="entry name" value="Pecanex"/>
</dbReference>
<dbReference type="InterPro" id="IPR007735">
    <property type="entry name" value="Pecanex_C"/>
</dbReference>
<dbReference type="PANTHER" id="PTHR12372">
    <property type="entry name" value="PECANEX"/>
    <property type="match status" value="1"/>
</dbReference>
<dbReference type="PANTHER" id="PTHR12372:SF2">
    <property type="entry name" value="PECANEX-LIKE PROTEIN 1"/>
    <property type="match status" value="1"/>
</dbReference>
<dbReference type="Pfam" id="PF05041">
    <property type="entry name" value="Pecanex_C"/>
    <property type="match status" value="1"/>
</dbReference>